<keyword id="KW-0472">Membrane</keyword>
<keyword id="KW-0597">Phosphoprotein</keyword>
<keyword id="KW-1185">Reference proteome</keyword>
<keyword id="KW-0812">Transmembrane</keyword>
<keyword id="KW-1133">Transmembrane helix</keyword>
<sequence length="244" mass="26596">MSTDMETAVVGKVDPEAPQPTHIDVHIHQESALAKLLLAGCSLLRIPASASTQSQGSSRVLVASWVVQTVLGALSVVLGGTLYIGHYLAMYSEGAPFWTGIVAMLAGAVAFLHKKRGGTCWALMRTLLVLASFCTAVAAIVIGSRELNFYWYFLGDDVCQRDSSYGWSTMPRTTPVPEEADRIALCIYYTSMLKTLLMSLQAMLLGIWVLLLLASLTPVCVYIWKRFFTKAETEEKKLLGAAVI</sequence>
<comment type="subunit">
    <text evidence="1">Interacts with MCOLN2.</text>
</comment>
<comment type="subcellular location">
    <subcellularLocation>
        <location evidence="4">Membrane</location>
        <topology evidence="4">Multi-pass membrane protein</topology>
    </subcellularLocation>
</comment>
<comment type="tissue specificity">
    <text evidence="3">Specifically expressed in lung, kidney and spleen.</text>
</comment>
<comment type="induction">
    <text evidence="3">Up-regulated in kidney upon proteinuria.</text>
</comment>
<comment type="similarity">
    <text evidence="4">Belongs to the TMEM176 family.</text>
</comment>
<comment type="sequence caution" evidence="4">
    <conflict type="frameshift">
        <sequence resource="EMBL-CDS" id="BAE29671"/>
    </conflict>
</comment>
<gene>
    <name type="primary">Tmem176a</name>
    <name type="synonym">Gs188</name>
    <name type="synonym">Keg2</name>
</gene>
<accession>Q9DCS1</accession>
<accession>Q3UCE2</accession>
<accession>Q8BV92</accession>
<accession>Q8K4T0</accession>
<name>T176A_MOUSE</name>
<organism>
    <name type="scientific">Mus musculus</name>
    <name type="common">Mouse</name>
    <dbReference type="NCBI Taxonomy" id="10090"/>
    <lineage>
        <taxon>Eukaryota</taxon>
        <taxon>Metazoa</taxon>
        <taxon>Chordata</taxon>
        <taxon>Craniata</taxon>
        <taxon>Vertebrata</taxon>
        <taxon>Euteleostomi</taxon>
        <taxon>Mammalia</taxon>
        <taxon>Eutheria</taxon>
        <taxon>Euarchontoglires</taxon>
        <taxon>Glires</taxon>
        <taxon>Rodentia</taxon>
        <taxon>Myomorpha</taxon>
        <taxon>Muroidea</taxon>
        <taxon>Muridae</taxon>
        <taxon>Murinae</taxon>
        <taxon>Mus</taxon>
        <taxon>Mus</taxon>
    </lineage>
</organism>
<dbReference type="EMBL" id="AB063313">
    <property type="protein sequence ID" value="BAB97230.1"/>
    <property type="molecule type" value="mRNA"/>
</dbReference>
<dbReference type="EMBL" id="AK002546">
    <property type="protein sequence ID" value="BAB22177.2"/>
    <property type="molecule type" value="mRNA"/>
</dbReference>
<dbReference type="EMBL" id="AK079378">
    <property type="protein sequence ID" value="BAC37625.1"/>
    <property type="molecule type" value="mRNA"/>
</dbReference>
<dbReference type="EMBL" id="AK150576">
    <property type="protein sequence ID" value="BAE29671.1"/>
    <property type="status" value="ALT_FRAME"/>
    <property type="molecule type" value="mRNA"/>
</dbReference>
<dbReference type="EMBL" id="AK165660">
    <property type="protein sequence ID" value="BAE38322.1"/>
    <property type="molecule type" value="mRNA"/>
</dbReference>
<dbReference type="EMBL" id="CT010190">
    <property type="protein sequence ID" value="CAJ18398.1"/>
    <property type="molecule type" value="mRNA"/>
</dbReference>
<dbReference type="EMBL" id="BC010831">
    <property type="protein sequence ID" value="AAH10831.2"/>
    <property type="molecule type" value="mRNA"/>
</dbReference>
<dbReference type="CCDS" id="CCDS39482.1"/>
<dbReference type="RefSeq" id="NP_001091741.1">
    <property type="nucleotide sequence ID" value="NM_001098271.1"/>
</dbReference>
<dbReference type="RefSeq" id="NP_079602.4">
    <property type="nucleotide sequence ID" value="NM_025326.4"/>
</dbReference>
<dbReference type="FunCoup" id="Q9DCS1">
    <property type="interactions" value="2"/>
</dbReference>
<dbReference type="STRING" id="10090.ENSMUSP00000098969"/>
<dbReference type="iPTMnet" id="Q9DCS1"/>
<dbReference type="PhosphoSitePlus" id="Q9DCS1"/>
<dbReference type="SwissPalm" id="Q9DCS1"/>
<dbReference type="PaxDb" id="10090-ENSMUSP00000098969"/>
<dbReference type="PeptideAtlas" id="Q9DCS1"/>
<dbReference type="ProteomicsDB" id="263222"/>
<dbReference type="Pumba" id="Q9DCS1"/>
<dbReference type="Antibodypedia" id="2112">
    <property type="antibodies" value="108 antibodies from 22 providers"/>
</dbReference>
<dbReference type="Ensembl" id="ENSMUST00000101426.11">
    <property type="protein sequence ID" value="ENSMUSP00000098969.5"/>
    <property type="gene ID" value="ENSMUSG00000023367.15"/>
</dbReference>
<dbReference type="Ensembl" id="ENSMUST00000168406.4">
    <property type="protein sequence ID" value="ENSMUSP00000131775.2"/>
    <property type="gene ID" value="ENSMUSG00000023367.15"/>
</dbReference>
<dbReference type="Ensembl" id="ENSMUST00000204482.3">
    <property type="protein sequence ID" value="ENSMUSP00000145101.2"/>
    <property type="gene ID" value="ENSMUSG00000023367.15"/>
</dbReference>
<dbReference type="GeneID" id="66058"/>
<dbReference type="KEGG" id="mmu:66058"/>
<dbReference type="UCSC" id="uc009bvw.1">
    <property type="organism name" value="mouse"/>
</dbReference>
<dbReference type="AGR" id="MGI:1913308"/>
<dbReference type="CTD" id="55365"/>
<dbReference type="MGI" id="MGI:1913308">
    <property type="gene designation" value="Tmem176a"/>
</dbReference>
<dbReference type="VEuPathDB" id="HostDB:ENSMUSG00000023367"/>
<dbReference type="eggNOG" id="ENOG502SF8T">
    <property type="taxonomic scope" value="Eukaryota"/>
</dbReference>
<dbReference type="GeneTree" id="ENSGT00530000064074"/>
<dbReference type="HOGENOM" id="CLU_090530_1_0_1"/>
<dbReference type="InParanoid" id="Q9DCS1"/>
<dbReference type="OMA" id="KQGGICW"/>
<dbReference type="OrthoDB" id="9837693at2759"/>
<dbReference type="PhylomeDB" id="Q9DCS1"/>
<dbReference type="TreeFam" id="TF335389"/>
<dbReference type="BioGRID-ORCS" id="66058">
    <property type="hits" value="1 hit in 78 CRISPR screens"/>
</dbReference>
<dbReference type="ChiTaRS" id="Tmem176a">
    <property type="organism name" value="mouse"/>
</dbReference>
<dbReference type="PRO" id="PR:Q9DCS1"/>
<dbReference type="Proteomes" id="UP000000589">
    <property type="component" value="Chromosome 6"/>
</dbReference>
<dbReference type="RNAct" id="Q9DCS1">
    <property type="molecule type" value="protein"/>
</dbReference>
<dbReference type="Bgee" id="ENSMUSG00000023367">
    <property type="expression patterns" value="Expressed in right kidney and 266 other cell types or tissues"/>
</dbReference>
<dbReference type="ExpressionAtlas" id="Q9DCS1">
    <property type="expression patterns" value="baseline and differential"/>
</dbReference>
<dbReference type="GO" id="GO:0016020">
    <property type="term" value="C:membrane"/>
    <property type="evidence" value="ECO:0007669"/>
    <property type="project" value="UniProtKB-SubCell"/>
</dbReference>
<dbReference type="GO" id="GO:2001199">
    <property type="term" value="P:negative regulation of dendritic cell differentiation"/>
    <property type="evidence" value="ECO:0000315"/>
    <property type="project" value="MGI"/>
</dbReference>
<dbReference type="InterPro" id="IPR007237">
    <property type="entry name" value="CD20-like"/>
</dbReference>
<dbReference type="InterPro" id="IPR009281">
    <property type="entry name" value="TMEM176A/TMEM176B"/>
</dbReference>
<dbReference type="PANTHER" id="PTHR15756">
    <property type="entry name" value="LR8/HCA112"/>
    <property type="match status" value="1"/>
</dbReference>
<dbReference type="PANTHER" id="PTHR15756:SF6">
    <property type="entry name" value="TRANSMEMBRANE PROTEIN 176A"/>
    <property type="match status" value="1"/>
</dbReference>
<dbReference type="Pfam" id="PF04103">
    <property type="entry name" value="CD20"/>
    <property type="match status" value="1"/>
</dbReference>
<proteinExistence type="evidence at protein level"/>
<feature type="chain" id="PRO_0000279873" description="Transmembrane protein 176A">
    <location>
        <begin position="1"/>
        <end position="244"/>
    </location>
</feature>
<feature type="transmembrane region" description="Helical" evidence="2">
    <location>
        <begin position="60"/>
        <end position="80"/>
    </location>
</feature>
<feature type="transmembrane region" description="Helical" evidence="2">
    <location>
        <begin position="92"/>
        <end position="112"/>
    </location>
</feature>
<feature type="transmembrane region" description="Helical" evidence="2">
    <location>
        <begin position="122"/>
        <end position="142"/>
    </location>
</feature>
<feature type="transmembrane region" description="Helical" evidence="2">
    <location>
        <begin position="204"/>
        <end position="224"/>
    </location>
</feature>
<feature type="modified residue" description="Phosphoserine" evidence="5">
    <location>
        <position position="42"/>
    </location>
</feature>
<feature type="sequence conflict" description="In Ref. 2; BAC37625." evidence="4" ref="2">
    <original>P</original>
    <variation>H</variation>
    <location>
        <position position="218"/>
    </location>
</feature>
<protein>
    <recommendedName>
        <fullName>Transmembrane protein 176A</fullName>
    </recommendedName>
    <alternativeName>
        <fullName>Gene signature 188</fullName>
    </alternativeName>
    <alternativeName>
        <fullName>Kidney-expressed gene 2 protein</fullName>
    </alternativeName>
</protein>
<evidence type="ECO:0000250" key="1">
    <source>
        <dbReference type="UniProtKB" id="Q96HP8"/>
    </source>
</evidence>
<evidence type="ECO:0000255" key="2"/>
<evidence type="ECO:0000269" key="3">
    <source>
    </source>
</evidence>
<evidence type="ECO:0000305" key="4"/>
<evidence type="ECO:0007744" key="5">
    <source>
    </source>
</evidence>
<reference key="1">
    <citation type="journal article" date="2002" name="Kidney Int.">
        <title>Gene expression profile of renal proximal tubules regulated by proteinuria.</title>
        <authorList>
            <person name="Nakajima H."/>
            <person name="Takenaka M."/>
            <person name="Kaimori J.-Y."/>
            <person name="Nagasawa Y."/>
            <person name="Kosugi A."/>
            <person name="Kawamoto S."/>
            <person name="Imai E."/>
            <person name="Hori M."/>
            <person name="Okubo K."/>
        </authorList>
    </citation>
    <scope>NUCLEOTIDE SEQUENCE [MRNA]</scope>
    <scope>INDUCTION</scope>
    <scope>TISSUE SPECIFICITY</scope>
    <source>
        <strain>C57BL/6N</strain>
        <tissue>Kidney</tissue>
    </source>
</reference>
<reference key="2">
    <citation type="journal article" date="2005" name="Science">
        <title>The transcriptional landscape of the mammalian genome.</title>
        <authorList>
            <person name="Carninci P."/>
            <person name="Kasukawa T."/>
            <person name="Katayama S."/>
            <person name="Gough J."/>
            <person name="Frith M.C."/>
            <person name="Maeda N."/>
            <person name="Oyama R."/>
            <person name="Ravasi T."/>
            <person name="Lenhard B."/>
            <person name="Wells C."/>
            <person name="Kodzius R."/>
            <person name="Shimokawa K."/>
            <person name="Bajic V.B."/>
            <person name="Brenner S.E."/>
            <person name="Batalov S."/>
            <person name="Forrest A.R."/>
            <person name="Zavolan M."/>
            <person name="Davis M.J."/>
            <person name="Wilming L.G."/>
            <person name="Aidinis V."/>
            <person name="Allen J.E."/>
            <person name="Ambesi-Impiombato A."/>
            <person name="Apweiler R."/>
            <person name="Aturaliya R.N."/>
            <person name="Bailey T.L."/>
            <person name="Bansal M."/>
            <person name="Baxter L."/>
            <person name="Beisel K.W."/>
            <person name="Bersano T."/>
            <person name="Bono H."/>
            <person name="Chalk A.M."/>
            <person name="Chiu K.P."/>
            <person name="Choudhary V."/>
            <person name="Christoffels A."/>
            <person name="Clutterbuck D.R."/>
            <person name="Crowe M.L."/>
            <person name="Dalla E."/>
            <person name="Dalrymple B.P."/>
            <person name="de Bono B."/>
            <person name="Della Gatta G."/>
            <person name="di Bernardo D."/>
            <person name="Down T."/>
            <person name="Engstrom P."/>
            <person name="Fagiolini M."/>
            <person name="Faulkner G."/>
            <person name="Fletcher C.F."/>
            <person name="Fukushima T."/>
            <person name="Furuno M."/>
            <person name="Futaki S."/>
            <person name="Gariboldi M."/>
            <person name="Georgii-Hemming P."/>
            <person name="Gingeras T.R."/>
            <person name="Gojobori T."/>
            <person name="Green R.E."/>
            <person name="Gustincich S."/>
            <person name="Harbers M."/>
            <person name="Hayashi Y."/>
            <person name="Hensch T.K."/>
            <person name="Hirokawa N."/>
            <person name="Hill D."/>
            <person name="Huminiecki L."/>
            <person name="Iacono M."/>
            <person name="Ikeo K."/>
            <person name="Iwama A."/>
            <person name="Ishikawa T."/>
            <person name="Jakt M."/>
            <person name="Kanapin A."/>
            <person name="Katoh M."/>
            <person name="Kawasawa Y."/>
            <person name="Kelso J."/>
            <person name="Kitamura H."/>
            <person name="Kitano H."/>
            <person name="Kollias G."/>
            <person name="Krishnan S.P."/>
            <person name="Kruger A."/>
            <person name="Kummerfeld S.K."/>
            <person name="Kurochkin I.V."/>
            <person name="Lareau L.F."/>
            <person name="Lazarevic D."/>
            <person name="Lipovich L."/>
            <person name="Liu J."/>
            <person name="Liuni S."/>
            <person name="McWilliam S."/>
            <person name="Madan Babu M."/>
            <person name="Madera M."/>
            <person name="Marchionni L."/>
            <person name="Matsuda H."/>
            <person name="Matsuzawa S."/>
            <person name="Miki H."/>
            <person name="Mignone F."/>
            <person name="Miyake S."/>
            <person name="Morris K."/>
            <person name="Mottagui-Tabar S."/>
            <person name="Mulder N."/>
            <person name="Nakano N."/>
            <person name="Nakauchi H."/>
            <person name="Ng P."/>
            <person name="Nilsson R."/>
            <person name="Nishiguchi S."/>
            <person name="Nishikawa S."/>
            <person name="Nori F."/>
            <person name="Ohara O."/>
            <person name="Okazaki Y."/>
            <person name="Orlando V."/>
            <person name="Pang K.C."/>
            <person name="Pavan W.J."/>
            <person name="Pavesi G."/>
            <person name="Pesole G."/>
            <person name="Petrovsky N."/>
            <person name="Piazza S."/>
            <person name="Reed J."/>
            <person name="Reid J.F."/>
            <person name="Ring B.Z."/>
            <person name="Ringwald M."/>
            <person name="Rost B."/>
            <person name="Ruan Y."/>
            <person name="Salzberg S.L."/>
            <person name="Sandelin A."/>
            <person name="Schneider C."/>
            <person name="Schoenbach C."/>
            <person name="Sekiguchi K."/>
            <person name="Semple C.A."/>
            <person name="Seno S."/>
            <person name="Sessa L."/>
            <person name="Sheng Y."/>
            <person name="Shibata Y."/>
            <person name="Shimada H."/>
            <person name="Shimada K."/>
            <person name="Silva D."/>
            <person name="Sinclair B."/>
            <person name="Sperling S."/>
            <person name="Stupka E."/>
            <person name="Sugiura K."/>
            <person name="Sultana R."/>
            <person name="Takenaka Y."/>
            <person name="Taki K."/>
            <person name="Tammoja K."/>
            <person name="Tan S.L."/>
            <person name="Tang S."/>
            <person name="Taylor M.S."/>
            <person name="Tegner J."/>
            <person name="Teichmann S.A."/>
            <person name="Ueda H.R."/>
            <person name="van Nimwegen E."/>
            <person name="Verardo R."/>
            <person name="Wei C.L."/>
            <person name="Yagi K."/>
            <person name="Yamanishi H."/>
            <person name="Zabarovsky E."/>
            <person name="Zhu S."/>
            <person name="Zimmer A."/>
            <person name="Hide W."/>
            <person name="Bult C."/>
            <person name="Grimmond S.M."/>
            <person name="Teasdale R.D."/>
            <person name="Liu E.T."/>
            <person name="Brusic V."/>
            <person name="Quackenbush J."/>
            <person name="Wahlestedt C."/>
            <person name="Mattick J.S."/>
            <person name="Hume D.A."/>
            <person name="Kai C."/>
            <person name="Sasaki D."/>
            <person name="Tomaru Y."/>
            <person name="Fukuda S."/>
            <person name="Kanamori-Katayama M."/>
            <person name="Suzuki M."/>
            <person name="Aoki J."/>
            <person name="Arakawa T."/>
            <person name="Iida J."/>
            <person name="Imamura K."/>
            <person name="Itoh M."/>
            <person name="Kato T."/>
            <person name="Kawaji H."/>
            <person name="Kawagashira N."/>
            <person name="Kawashima T."/>
            <person name="Kojima M."/>
            <person name="Kondo S."/>
            <person name="Konno H."/>
            <person name="Nakano K."/>
            <person name="Ninomiya N."/>
            <person name="Nishio T."/>
            <person name="Okada M."/>
            <person name="Plessy C."/>
            <person name="Shibata K."/>
            <person name="Shiraki T."/>
            <person name="Suzuki S."/>
            <person name="Tagami M."/>
            <person name="Waki K."/>
            <person name="Watahiki A."/>
            <person name="Okamura-Oho Y."/>
            <person name="Suzuki H."/>
            <person name="Kawai J."/>
            <person name="Hayashizaki Y."/>
        </authorList>
    </citation>
    <scope>NUCLEOTIDE SEQUENCE [LARGE SCALE MRNA]</scope>
    <source>
        <strain>C3H/HeJ</strain>
        <strain>C57BL/6J</strain>
        <tissue>Bone marrow</tissue>
        <tissue>Brain</tissue>
        <tissue>Cerebellum</tissue>
        <tissue>Kidney</tissue>
    </source>
</reference>
<reference key="3">
    <citation type="submission" date="2005-07" db="EMBL/GenBank/DDBJ databases">
        <title>Cloning of mouse full open reading frames in Gateway(R) system entry vector (pDONR201).</title>
        <authorList>
            <person name="Ebert L."/>
            <person name="Muenstermann E."/>
            <person name="Schatten R."/>
            <person name="Henze S."/>
            <person name="Bohn E."/>
            <person name="Mollenhauer J."/>
            <person name="Wiemann S."/>
            <person name="Schick M."/>
            <person name="Korn B."/>
        </authorList>
    </citation>
    <scope>NUCLEOTIDE SEQUENCE [LARGE SCALE MRNA]</scope>
</reference>
<reference key="4">
    <citation type="journal article" date="2004" name="Genome Res.">
        <title>The status, quality, and expansion of the NIH full-length cDNA project: the Mammalian Gene Collection (MGC).</title>
        <authorList>
            <consortium name="The MGC Project Team"/>
        </authorList>
    </citation>
    <scope>NUCLEOTIDE SEQUENCE [LARGE SCALE MRNA]</scope>
    <source>
        <strain>FVB/N</strain>
        <tissue>Kidney</tissue>
    </source>
</reference>
<reference key="5">
    <citation type="journal article" date="2010" name="Cell">
        <title>A tissue-specific atlas of mouse protein phosphorylation and expression.</title>
        <authorList>
            <person name="Huttlin E.L."/>
            <person name="Jedrychowski M.P."/>
            <person name="Elias J.E."/>
            <person name="Goswami T."/>
            <person name="Rad R."/>
            <person name="Beausoleil S.A."/>
            <person name="Villen J."/>
            <person name="Haas W."/>
            <person name="Sowa M.E."/>
            <person name="Gygi S.P."/>
        </authorList>
    </citation>
    <scope>PHOSPHORYLATION [LARGE SCALE ANALYSIS] AT SER-42</scope>
    <scope>IDENTIFICATION BY MASS SPECTROMETRY [LARGE SCALE ANALYSIS]</scope>
    <source>
        <tissue>Kidney</tissue>
    </source>
</reference>